<accession>Q3K0D3</accession>
<evidence type="ECO:0000255" key="1">
    <source>
        <dbReference type="HAMAP-Rule" id="MF_00214"/>
    </source>
</evidence>
<sequence>MKIVVPVMPRSLEEAQEIDLSKFDSVDIIEWRADALPKDDIINVAPAIFEKFAGHEIIFTLRTTREGGNIVLSDAEYVELIQKINSIYNPDYIDFEYFSHKEVFQEMLEFPNLVLSYHNFQETPENIMEIFSELTALAPRVVKIAVMPKNEQDVLDVMNYTRGFKTINPDQVYATVSMSKIGRISRFAGDVTGSSWTFAYLDSSIAPGQITISEMKRVKALLDAD</sequence>
<protein>
    <recommendedName>
        <fullName evidence="1">3-dehydroquinate dehydratase</fullName>
        <shortName evidence="1">3-dehydroquinase</shortName>
        <ecNumber evidence="1">4.2.1.10</ecNumber>
    </recommendedName>
    <alternativeName>
        <fullName evidence="1">Type I DHQase</fullName>
    </alternativeName>
    <alternativeName>
        <fullName evidence="1">Type I dehydroquinase</fullName>
        <shortName evidence="1">DHQ1</shortName>
    </alternativeName>
</protein>
<feature type="chain" id="PRO_1000043191" description="3-dehydroquinate dehydratase">
    <location>
        <begin position="1"/>
        <end position="225"/>
    </location>
</feature>
<feature type="active site" description="Proton donor/acceptor" evidence="1">
    <location>
        <position position="118"/>
    </location>
</feature>
<feature type="active site" description="Schiff-base intermediate with substrate" evidence="1">
    <location>
        <position position="143"/>
    </location>
</feature>
<feature type="binding site" evidence="1">
    <location>
        <begin position="30"/>
        <end position="32"/>
    </location>
    <ligand>
        <name>3-dehydroquinate</name>
        <dbReference type="ChEBI" id="CHEBI:32364"/>
    </ligand>
</feature>
<feature type="binding site" evidence="1">
    <location>
        <position position="62"/>
    </location>
    <ligand>
        <name>3-dehydroquinate</name>
        <dbReference type="ChEBI" id="CHEBI:32364"/>
    </ligand>
</feature>
<feature type="binding site" evidence="1">
    <location>
        <position position="186"/>
    </location>
    <ligand>
        <name>3-dehydroquinate</name>
        <dbReference type="ChEBI" id="CHEBI:32364"/>
    </ligand>
</feature>
<feature type="binding site" evidence="1">
    <location>
        <position position="209"/>
    </location>
    <ligand>
        <name>3-dehydroquinate</name>
        <dbReference type="ChEBI" id="CHEBI:32364"/>
    </ligand>
</feature>
<reference key="1">
    <citation type="journal article" date="2005" name="Proc. Natl. Acad. Sci. U.S.A.">
        <title>Genome analysis of multiple pathogenic isolates of Streptococcus agalactiae: implications for the microbial 'pan-genome'.</title>
        <authorList>
            <person name="Tettelin H."/>
            <person name="Masignani V."/>
            <person name="Cieslewicz M.J."/>
            <person name="Donati C."/>
            <person name="Medini D."/>
            <person name="Ward N.L."/>
            <person name="Angiuoli S.V."/>
            <person name="Crabtree J."/>
            <person name="Jones A.L."/>
            <person name="Durkin A.S."/>
            <person name="DeBoy R.T."/>
            <person name="Davidsen T.M."/>
            <person name="Mora M."/>
            <person name="Scarselli M."/>
            <person name="Margarit y Ros I."/>
            <person name="Peterson J.D."/>
            <person name="Hauser C.R."/>
            <person name="Sundaram J.P."/>
            <person name="Nelson W.C."/>
            <person name="Madupu R."/>
            <person name="Brinkac L.M."/>
            <person name="Dodson R.J."/>
            <person name="Rosovitz M.J."/>
            <person name="Sullivan S.A."/>
            <person name="Daugherty S.C."/>
            <person name="Haft D.H."/>
            <person name="Selengut J."/>
            <person name="Gwinn M.L."/>
            <person name="Zhou L."/>
            <person name="Zafar N."/>
            <person name="Khouri H."/>
            <person name="Radune D."/>
            <person name="Dimitrov G."/>
            <person name="Watkins K."/>
            <person name="O'Connor K.J."/>
            <person name="Smith S."/>
            <person name="Utterback T.R."/>
            <person name="White O."/>
            <person name="Rubens C.E."/>
            <person name="Grandi G."/>
            <person name="Madoff L.C."/>
            <person name="Kasper D.L."/>
            <person name="Telford J.L."/>
            <person name="Wessels M.R."/>
            <person name="Rappuoli R."/>
            <person name="Fraser C.M."/>
        </authorList>
    </citation>
    <scope>NUCLEOTIDE SEQUENCE [LARGE SCALE GENOMIC DNA]</scope>
    <source>
        <strain>ATCC 27591 / A909 / CDC SS700</strain>
    </source>
</reference>
<proteinExistence type="inferred from homology"/>
<dbReference type="EC" id="4.2.1.10" evidence="1"/>
<dbReference type="EMBL" id="CP000114">
    <property type="protein sequence ID" value="ABA45237.1"/>
    <property type="molecule type" value="Genomic_DNA"/>
</dbReference>
<dbReference type="RefSeq" id="WP_000707048.1">
    <property type="nucleotide sequence ID" value="NC_007432.1"/>
</dbReference>
<dbReference type="SMR" id="Q3K0D3"/>
<dbReference type="GeneID" id="66886255"/>
<dbReference type="KEGG" id="sak:SAK_1412"/>
<dbReference type="HOGENOM" id="CLU_064444_0_0_9"/>
<dbReference type="UniPathway" id="UPA00053">
    <property type="reaction ID" value="UER00086"/>
</dbReference>
<dbReference type="GO" id="GO:0003855">
    <property type="term" value="F:3-dehydroquinate dehydratase activity"/>
    <property type="evidence" value="ECO:0007669"/>
    <property type="project" value="UniProtKB-UniRule"/>
</dbReference>
<dbReference type="GO" id="GO:0046279">
    <property type="term" value="P:3,4-dihydroxybenzoate biosynthetic process"/>
    <property type="evidence" value="ECO:0007669"/>
    <property type="project" value="TreeGrafter"/>
</dbReference>
<dbReference type="GO" id="GO:0008652">
    <property type="term" value="P:amino acid biosynthetic process"/>
    <property type="evidence" value="ECO:0007669"/>
    <property type="project" value="UniProtKB-KW"/>
</dbReference>
<dbReference type="GO" id="GO:0009073">
    <property type="term" value="P:aromatic amino acid family biosynthetic process"/>
    <property type="evidence" value="ECO:0007669"/>
    <property type="project" value="UniProtKB-KW"/>
</dbReference>
<dbReference type="GO" id="GO:0009423">
    <property type="term" value="P:chorismate biosynthetic process"/>
    <property type="evidence" value="ECO:0007669"/>
    <property type="project" value="UniProtKB-UniRule"/>
</dbReference>
<dbReference type="CDD" id="cd00502">
    <property type="entry name" value="DHQase_I"/>
    <property type="match status" value="1"/>
</dbReference>
<dbReference type="FunFam" id="3.20.20.70:FF:000047">
    <property type="entry name" value="3-dehydroquinate dehydratase"/>
    <property type="match status" value="1"/>
</dbReference>
<dbReference type="Gene3D" id="3.20.20.70">
    <property type="entry name" value="Aldolase class I"/>
    <property type="match status" value="1"/>
</dbReference>
<dbReference type="HAMAP" id="MF_00214">
    <property type="entry name" value="AroD"/>
    <property type="match status" value="1"/>
</dbReference>
<dbReference type="InterPro" id="IPR013785">
    <property type="entry name" value="Aldolase_TIM"/>
</dbReference>
<dbReference type="InterPro" id="IPR001381">
    <property type="entry name" value="DHquinase_I"/>
</dbReference>
<dbReference type="InterPro" id="IPR050146">
    <property type="entry name" value="Type-I_3-dehydroquinase"/>
</dbReference>
<dbReference type="NCBIfam" id="TIGR01093">
    <property type="entry name" value="aroD"/>
    <property type="match status" value="1"/>
</dbReference>
<dbReference type="PANTHER" id="PTHR43699">
    <property type="entry name" value="3-DEHYDROQUINATE DEHYDRATASE"/>
    <property type="match status" value="1"/>
</dbReference>
<dbReference type="PANTHER" id="PTHR43699:SF1">
    <property type="entry name" value="3-DEHYDROQUINATE DEHYDRATASE"/>
    <property type="match status" value="1"/>
</dbReference>
<dbReference type="Pfam" id="PF01487">
    <property type="entry name" value="DHquinase_I"/>
    <property type="match status" value="1"/>
</dbReference>
<dbReference type="SUPFAM" id="SSF51569">
    <property type="entry name" value="Aldolase"/>
    <property type="match status" value="1"/>
</dbReference>
<comment type="function">
    <text evidence="1">Involved in the third step of the chorismate pathway, which leads to the biosynthesis of aromatic amino acids. Catalyzes the cis-dehydration of 3-dehydroquinate (DHQ) and introduces the first double bond of the aromatic ring to yield 3-dehydroshikimate.</text>
</comment>
<comment type="catalytic activity">
    <reaction evidence="1">
        <text>3-dehydroquinate = 3-dehydroshikimate + H2O</text>
        <dbReference type="Rhea" id="RHEA:21096"/>
        <dbReference type="ChEBI" id="CHEBI:15377"/>
        <dbReference type="ChEBI" id="CHEBI:16630"/>
        <dbReference type="ChEBI" id="CHEBI:32364"/>
        <dbReference type="EC" id="4.2.1.10"/>
    </reaction>
</comment>
<comment type="pathway">
    <text evidence="1">Metabolic intermediate biosynthesis; chorismate biosynthesis; chorismate from D-erythrose 4-phosphate and phosphoenolpyruvate: step 3/7.</text>
</comment>
<comment type="subunit">
    <text evidence="1">Homodimer.</text>
</comment>
<comment type="similarity">
    <text evidence="1">Belongs to the type-I 3-dehydroquinase family.</text>
</comment>
<name>AROD_STRA1</name>
<gene>
    <name evidence="1" type="primary">aroD</name>
    <name type="ordered locus">SAK_1412</name>
</gene>
<organism>
    <name type="scientific">Streptococcus agalactiae serotype Ia (strain ATCC 27591 / A909 / CDC SS700)</name>
    <dbReference type="NCBI Taxonomy" id="205921"/>
    <lineage>
        <taxon>Bacteria</taxon>
        <taxon>Bacillati</taxon>
        <taxon>Bacillota</taxon>
        <taxon>Bacilli</taxon>
        <taxon>Lactobacillales</taxon>
        <taxon>Streptococcaceae</taxon>
        <taxon>Streptococcus</taxon>
    </lineage>
</organism>
<keyword id="KW-0028">Amino-acid biosynthesis</keyword>
<keyword id="KW-0057">Aromatic amino acid biosynthesis</keyword>
<keyword id="KW-0456">Lyase</keyword>
<keyword id="KW-0704">Schiff base</keyword>